<sequence length="242" mass="28013">MHLTVFYLVALCTFASADDQPRYIINKLPYEQIKPFPAVEPDCRINEIALQFQPQLHISSGCHPYPAVDKNGYISTGLGVSHVFTDCDGSPEGSQVYGRAYVYKGYLAIMYAWYFPRDYMVSPVWIGHRNAWEHAVLWLGGLTEDPELLAVAAKSMWGYRTYAPPKSKYMKDDSFKLEYSWMVMSHHYLTATKDPGEFQDLIMWNNMTERARESLRLKSSSHFKSPLSDDRFFRALRKSYPF</sequence>
<dbReference type="EMBL" id="MT722079">
    <property type="protein sequence ID" value="QOT13801.1"/>
    <property type="molecule type" value="mRNA"/>
</dbReference>
<dbReference type="SMR" id="A0A7M2BSK1"/>
<dbReference type="GO" id="GO:0005576">
    <property type="term" value="C:extracellular region"/>
    <property type="evidence" value="ECO:0007669"/>
    <property type="project" value="UniProtKB-SubCell"/>
</dbReference>
<dbReference type="InterPro" id="IPR008701">
    <property type="entry name" value="NPP1"/>
</dbReference>
<dbReference type="PANTHER" id="PTHR33657">
    <property type="entry name" value="DOMAIN PROTEIN, PUTATIVE (AFU_ORTHOLOGUE AFUA_5G00600)-RELATED"/>
    <property type="match status" value="1"/>
</dbReference>
<dbReference type="PANTHER" id="PTHR33657:SF8">
    <property type="entry name" value="DOMAIN PROTEIN, PUTATIVE (AFU_ORTHOLOGUE AFUA_5G00600)-RELATED"/>
    <property type="match status" value="1"/>
</dbReference>
<dbReference type="Pfam" id="PF05630">
    <property type="entry name" value="NPP1"/>
    <property type="match status" value="1"/>
</dbReference>
<dbReference type="PIRSF" id="PIRSF029958">
    <property type="entry name" value="Necrosis-inducing_protein"/>
    <property type="match status" value="1"/>
</dbReference>
<protein>
    <recommendedName>
        <fullName evidence="3">NLP effector protein 8</fullName>
    </recommendedName>
    <alternativeName>
        <fullName evidence="3">Nep1-like protein 8</fullName>
    </alternativeName>
</protein>
<accession>A0A7M2BSK1</accession>
<gene>
    <name evidence="3" type="primary">NLP8</name>
</gene>
<proteinExistence type="evidence at transcript level"/>
<evidence type="ECO:0000255" key="1"/>
<evidence type="ECO:0000255" key="2">
    <source>
        <dbReference type="PROSITE-ProRule" id="PRU00498"/>
    </source>
</evidence>
<evidence type="ECO:0000303" key="3">
    <source>
    </source>
</evidence>
<evidence type="ECO:0000305" key="4"/>
<evidence type="ECO:0000305" key="5">
    <source>
    </source>
</evidence>
<reference key="1">
    <citation type="journal article" date="2020" name="Front. Plant Sci.">
        <title>Identification and characterization of Nep1-like proteins from the grapevine downy mildew pathogen Plasmopara viticola.</title>
        <authorList>
            <person name="Schumacher S."/>
            <person name="Grosser K."/>
            <person name="Voegele R.T."/>
            <person name="Kassemeyer H.H."/>
            <person name="Fuchs R."/>
        </authorList>
    </citation>
    <scope>NUCLEOTIDE SEQUENCE [MRNA]</scope>
    <scope>IDENTIFICATION</scope>
    <scope>DOMAIN</scope>
    <source>
        <strain>Pv1446</strain>
    </source>
</reference>
<feature type="signal peptide" evidence="1">
    <location>
        <begin position="1"/>
        <end position="17"/>
    </location>
</feature>
<feature type="chain" id="PRO_5029597912" description="NLP effector protein 8">
    <location>
        <begin position="18"/>
        <end position="242"/>
    </location>
</feature>
<feature type="short sequence motif" description="Conserved undecapeptide motif" evidence="5">
    <location>
        <begin position="108"/>
        <end position="118"/>
    </location>
</feature>
<feature type="short sequence motif" description="Conserved heptapeptide motif" evidence="5">
    <location>
        <begin position="127"/>
        <end position="133"/>
    </location>
</feature>
<feature type="glycosylation site" description="N-linked (GlcNAc...) asparagine" evidence="2">
    <location>
        <position position="206"/>
    </location>
</feature>
<organism>
    <name type="scientific">Plasmopara viticola</name>
    <name type="common">Downy mildew of grapevine</name>
    <name type="synonym">Botrytis viticola</name>
    <dbReference type="NCBI Taxonomy" id="143451"/>
    <lineage>
        <taxon>Eukaryota</taxon>
        <taxon>Sar</taxon>
        <taxon>Stramenopiles</taxon>
        <taxon>Oomycota</taxon>
        <taxon>Peronosporales</taxon>
        <taxon>Peronosporaceae</taxon>
        <taxon>Plasmopara</taxon>
    </lineage>
</organism>
<comment type="function">
    <text evidence="5">Probable secreted effector that may act as a pathogen-associated molecular pattern (PAMP) recognized by the plant immune system.</text>
</comment>
<comment type="subcellular location">
    <subcellularLocation>
        <location evidence="5">Secreted</location>
    </subcellularLocation>
</comment>
<comment type="domain">
    <text evidence="5">The structure of NLP effectors is remarkably conserved with a high level of conservation of a central region containing the conserved undecapeptide motif AIMYAWYFPKD and heptapeptide motif GHRHDWE.</text>
</comment>
<comment type="similarity">
    <text evidence="4">Belongs to the Necrosis inducing protein (NPP1) family.</text>
</comment>
<name>NLP8_PLAVT</name>
<keyword id="KW-0325">Glycoprotein</keyword>
<keyword id="KW-0964">Secreted</keyword>
<keyword id="KW-0732">Signal</keyword>
<keyword id="KW-0843">Virulence</keyword>